<gene>
    <name evidence="1" type="primary">plsY</name>
    <name type="ordered locus">HD_0977</name>
</gene>
<feature type="chain" id="PRO_0000188377" description="Glycerol-3-phosphate acyltransferase">
    <location>
        <begin position="1"/>
        <end position="199"/>
    </location>
</feature>
<feature type="transmembrane region" description="Helical" evidence="1">
    <location>
        <begin position="5"/>
        <end position="25"/>
    </location>
</feature>
<feature type="transmembrane region" description="Helical" evidence="1">
    <location>
        <begin position="54"/>
        <end position="74"/>
    </location>
</feature>
<feature type="transmembrane region" description="Helical" evidence="1">
    <location>
        <begin position="82"/>
        <end position="102"/>
    </location>
</feature>
<feature type="transmembrane region" description="Helical" evidence="1">
    <location>
        <begin position="114"/>
        <end position="134"/>
    </location>
</feature>
<feature type="transmembrane region" description="Helical" evidence="1">
    <location>
        <begin position="154"/>
        <end position="174"/>
    </location>
</feature>
<protein>
    <recommendedName>
        <fullName evidence="1">Glycerol-3-phosphate acyltransferase</fullName>
    </recommendedName>
    <alternativeName>
        <fullName evidence="1">Acyl-PO4 G3P acyltransferase</fullName>
    </alternativeName>
    <alternativeName>
        <fullName evidence="1">Acyl-phosphate--glycerol-3-phosphate acyltransferase</fullName>
    </alternativeName>
    <alternativeName>
        <fullName evidence="1">G3P acyltransferase</fullName>
        <shortName evidence="1">GPAT</shortName>
        <ecNumber evidence="1">2.3.1.275</ecNumber>
    </alternativeName>
    <alternativeName>
        <fullName evidence="1">Lysophosphatidic acid synthase</fullName>
        <shortName evidence="1">LPA synthase</shortName>
    </alternativeName>
</protein>
<comment type="function">
    <text evidence="1">Catalyzes the transfer of an acyl group from acyl-phosphate (acyl-PO(4)) to glycerol-3-phosphate (G3P) to form lysophosphatidic acid (LPA). This enzyme utilizes acyl-phosphate as fatty acyl donor, but not acyl-CoA or acyl-ACP.</text>
</comment>
<comment type="catalytic activity">
    <reaction evidence="1">
        <text>an acyl phosphate + sn-glycerol 3-phosphate = a 1-acyl-sn-glycero-3-phosphate + phosphate</text>
        <dbReference type="Rhea" id="RHEA:34075"/>
        <dbReference type="ChEBI" id="CHEBI:43474"/>
        <dbReference type="ChEBI" id="CHEBI:57597"/>
        <dbReference type="ChEBI" id="CHEBI:57970"/>
        <dbReference type="ChEBI" id="CHEBI:59918"/>
        <dbReference type="EC" id="2.3.1.275"/>
    </reaction>
</comment>
<comment type="pathway">
    <text evidence="1">Lipid metabolism; phospholipid metabolism.</text>
</comment>
<comment type="subunit">
    <text evidence="1">Probably interacts with PlsX.</text>
</comment>
<comment type="subcellular location">
    <subcellularLocation>
        <location evidence="1">Cell inner membrane</location>
        <topology evidence="1">Multi-pass membrane protein</topology>
    </subcellularLocation>
</comment>
<comment type="similarity">
    <text evidence="1">Belongs to the PlsY family.</text>
</comment>
<accession>Q7VMJ8</accession>
<evidence type="ECO:0000255" key="1">
    <source>
        <dbReference type="HAMAP-Rule" id="MF_01043"/>
    </source>
</evidence>
<proteinExistence type="inferred from homology"/>
<keyword id="KW-0997">Cell inner membrane</keyword>
<keyword id="KW-1003">Cell membrane</keyword>
<keyword id="KW-0444">Lipid biosynthesis</keyword>
<keyword id="KW-0443">Lipid metabolism</keyword>
<keyword id="KW-0472">Membrane</keyword>
<keyword id="KW-0594">Phospholipid biosynthesis</keyword>
<keyword id="KW-1208">Phospholipid metabolism</keyword>
<keyword id="KW-1185">Reference proteome</keyword>
<keyword id="KW-0808">Transferase</keyword>
<keyword id="KW-0812">Transmembrane</keyword>
<keyword id="KW-1133">Transmembrane helix</keyword>
<organism>
    <name type="scientific">Haemophilus ducreyi (strain 35000HP / ATCC 700724)</name>
    <dbReference type="NCBI Taxonomy" id="233412"/>
    <lineage>
        <taxon>Bacteria</taxon>
        <taxon>Pseudomonadati</taxon>
        <taxon>Pseudomonadota</taxon>
        <taxon>Gammaproteobacteria</taxon>
        <taxon>Pasteurellales</taxon>
        <taxon>Pasteurellaceae</taxon>
        <taxon>Haemophilus</taxon>
    </lineage>
</organism>
<sequence length="199" mass="21875">MTLTAYLLILTAYLLGSICSAIIFCRLAGLPDPRQNGSHNPGATNVLRNGGKLAAIGVLLFDTLKGSLPVLIAFRCDLSPSAIGLIGLAACLGHIFPIFFQFRGGKGVATAFGVFFSISIIASTTMICAWLIVFLLTRFSSLSAVIMALTAPFYIWCFKPEFTFPVALICCLLIYRHHDNIQRLWRGQEERLWDKLKSK</sequence>
<reference key="1">
    <citation type="submission" date="2003-06" db="EMBL/GenBank/DDBJ databases">
        <title>The complete genome sequence of Haemophilus ducreyi.</title>
        <authorList>
            <person name="Munson R.S. Jr."/>
            <person name="Ray W.C."/>
            <person name="Mahairas G."/>
            <person name="Sabo P."/>
            <person name="Mungur R."/>
            <person name="Johnson L."/>
            <person name="Nguyen D."/>
            <person name="Wang J."/>
            <person name="Forst C."/>
            <person name="Hood L."/>
        </authorList>
    </citation>
    <scope>NUCLEOTIDE SEQUENCE [LARGE SCALE GENOMIC DNA]</scope>
    <source>
        <strain>35000HP / ATCC 700724</strain>
    </source>
</reference>
<name>PLSY_HAEDU</name>
<dbReference type="EC" id="2.3.1.275" evidence="1"/>
<dbReference type="EMBL" id="AE017143">
    <property type="protein sequence ID" value="AAP95858.1"/>
    <property type="molecule type" value="Genomic_DNA"/>
</dbReference>
<dbReference type="RefSeq" id="WP_010944908.1">
    <property type="nucleotide sequence ID" value="NC_002940.2"/>
</dbReference>
<dbReference type="SMR" id="Q7VMJ8"/>
<dbReference type="STRING" id="233412.HD_0977"/>
<dbReference type="KEGG" id="hdu:HD_0977"/>
<dbReference type="eggNOG" id="COG0344">
    <property type="taxonomic scope" value="Bacteria"/>
</dbReference>
<dbReference type="HOGENOM" id="CLU_081254_0_2_6"/>
<dbReference type="OrthoDB" id="9777124at2"/>
<dbReference type="UniPathway" id="UPA00085"/>
<dbReference type="Proteomes" id="UP000001022">
    <property type="component" value="Chromosome"/>
</dbReference>
<dbReference type="GO" id="GO:0005886">
    <property type="term" value="C:plasma membrane"/>
    <property type="evidence" value="ECO:0007669"/>
    <property type="project" value="UniProtKB-SubCell"/>
</dbReference>
<dbReference type="GO" id="GO:0043772">
    <property type="term" value="F:acyl-phosphate glycerol-3-phosphate acyltransferase activity"/>
    <property type="evidence" value="ECO:0007669"/>
    <property type="project" value="UniProtKB-UniRule"/>
</dbReference>
<dbReference type="GO" id="GO:0008654">
    <property type="term" value="P:phospholipid biosynthetic process"/>
    <property type="evidence" value="ECO:0007669"/>
    <property type="project" value="UniProtKB-UniRule"/>
</dbReference>
<dbReference type="HAMAP" id="MF_01043">
    <property type="entry name" value="PlsY"/>
    <property type="match status" value="1"/>
</dbReference>
<dbReference type="InterPro" id="IPR003811">
    <property type="entry name" value="G3P_acylTferase_PlsY"/>
</dbReference>
<dbReference type="NCBIfam" id="TIGR00023">
    <property type="entry name" value="glycerol-3-phosphate 1-O-acyltransferase PlsY"/>
    <property type="match status" value="1"/>
</dbReference>
<dbReference type="PANTHER" id="PTHR30309:SF0">
    <property type="entry name" value="GLYCEROL-3-PHOSPHATE ACYLTRANSFERASE-RELATED"/>
    <property type="match status" value="1"/>
</dbReference>
<dbReference type="PANTHER" id="PTHR30309">
    <property type="entry name" value="INNER MEMBRANE PROTEIN YGIH"/>
    <property type="match status" value="1"/>
</dbReference>
<dbReference type="Pfam" id="PF02660">
    <property type="entry name" value="G3P_acyltransf"/>
    <property type="match status" value="1"/>
</dbReference>
<dbReference type="SMART" id="SM01207">
    <property type="entry name" value="G3P_acyltransf"/>
    <property type="match status" value="1"/>
</dbReference>